<comment type="function">
    <text evidence="1">DNA-dependent RNA polymerase catalyzes the transcription of DNA into RNA using the four ribonucleoside triphosphates as substrates.</text>
</comment>
<comment type="catalytic activity">
    <reaction evidence="1">
        <text>RNA(n) + a ribonucleoside 5'-triphosphate = RNA(n+1) + diphosphate</text>
        <dbReference type="Rhea" id="RHEA:21248"/>
        <dbReference type="Rhea" id="RHEA-COMP:14527"/>
        <dbReference type="Rhea" id="RHEA-COMP:17342"/>
        <dbReference type="ChEBI" id="CHEBI:33019"/>
        <dbReference type="ChEBI" id="CHEBI:61557"/>
        <dbReference type="ChEBI" id="CHEBI:140395"/>
        <dbReference type="EC" id="2.7.7.6"/>
    </reaction>
</comment>
<comment type="cofactor">
    <cofactor evidence="1">
        <name>Zn(2+)</name>
        <dbReference type="ChEBI" id="CHEBI:29105"/>
    </cofactor>
    <text evidence="1">Binds 1 Zn(2+) ion per subunit.</text>
</comment>
<comment type="subunit">
    <text evidence="1">In plastids the minimal PEP RNA polymerase catalytic core is composed of four subunits: alpha, beta, beta', and beta''. When a (nuclear-encoded) sigma factor is associated with the core the holoenzyme is formed, which can initiate transcription.</text>
</comment>
<comment type="subcellular location">
    <subcellularLocation>
        <location evidence="1">Plastid</location>
        <location evidence="1">Chloroplast</location>
    </subcellularLocation>
</comment>
<comment type="similarity">
    <text evidence="1">Belongs to the RNA polymerase beta' chain family. RpoC2 subfamily.</text>
</comment>
<protein>
    <recommendedName>
        <fullName evidence="1">DNA-directed RNA polymerase subunit beta''</fullName>
        <ecNumber evidence="1">2.7.7.6</ecNumber>
    </recommendedName>
    <alternativeName>
        <fullName evidence="1">PEP</fullName>
    </alternativeName>
    <alternativeName>
        <fullName evidence="1">Plastid-encoded RNA polymerase subunit beta''</fullName>
        <shortName evidence="1">RNA polymerase subunit beta''</shortName>
    </alternativeName>
</protein>
<name>RPOC2_CUCSA</name>
<reference key="1">
    <citation type="journal article" date="2006" name="Plant Cell Rep.">
        <title>Complete sequence and organization of the cucumber (Cucumis sativus L. cv. Baekmibaekdadagi) chloroplast genome.</title>
        <authorList>
            <person name="Kim J.-S."/>
            <person name="Jung J.D."/>
            <person name="Lee J.-A."/>
            <person name="Park H.-W."/>
            <person name="Oh K.-H."/>
            <person name="Jeong W.J."/>
            <person name="Choi D.-W."/>
            <person name="Liu J.R."/>
            <person name="Cho K.Y."/>
        </authorList>
    </citation>
    <scope>NUCLEOTIDE SEQUENCE [LARGE SCALE GENOMIC DNA]</scope>
    <source>
        <strain>cv. Baekmibaekdadagi</strain>
    </source>
</reference>
<reference key="2">
    <citation type="journal article" date="2007" name="Cell. Mol. Biol. Lett.">
        <title>The complete structure of the cucumber (Cucumis sativus L.) chloroplast genome: its composition and comparative analysis.</title>
        <authorList>
            <person name="Plader W.W."/>
            <person name="Yukawa Y."/>
            <person name="Sugiura M."/>
            <person name="Malepszy S."/>
        </authorList>
    </citation>
    <scope>NUCLEOTIDE SEQUENCE [LARGE SCALE GENOMIC DNA]</scope>
    <source>
        <strain>cv. Borszczagowski</strain>
    </source>
</reference>
<reference key="3">
    <citation type="journal article" date="2007" name="Genome">
        <title>Sequencing cucumber (Cucumis sativus L.) chloroplast genomes identifies differences between chilling-tolerant and -susceptible cucumber lines.</title>
        <authorList>
            <person name="Chung S.-M."/>
            <person name="Gordon V.S."/>
            <person name="Staub J.E."/>
        </authorList>
    </citation>
    <scope>NUCLEOTIDE SEQUENCE [LARGE SCALE GENOMIC DNA]</scope>
    <source>
        <strain>cv. Chipper</strain>
        <strain>cv. Gy14</strain>
    </source>
</reference>
<sequence length="1394" mass="158204">MEVLMAERADLVFHNKVIDGTAIKRLISRLIDHFGMAYTSHILDQLKTLGFQQATATSISLGIDDLLTIPSKGWLVQDAEQQSLILEKHHHYGNVHAVEKLRQSIEIWYATSEYLRQEMNPNFRMTDPFNPVHIMSFSGARGNASQVHQLVGMRGLMSDPQGQMIDLPIQSNLREGLSLTEYIISCYGARKGVVDTAVRTSDAGYLTRRLVEVVQHIVVRRTDCGTIRGILVSPGNRMIPERIFIQTLIGRVLADDIYMGPRCIGVRNQDIGIGLINRFITFQTQPISIRTPFTCRSTSWICRLCYGRSPTHGDLVELGEAVGIIAGQSIGEPGTQLTLRTFHTGGVFTGGTAEHIRAPSNGKIKFNEDLVHPTRTRHGHPAFLCYIDLYVTIESEDIIHNVTIPPKSLLLVQNDQYVESEQVIAEIRAGTYTLNLKERVRKHIYSDSEGEMHWSTDVYHAPEFTYSNVHLLPKTSHLWILSGGSCGCSLVPFSLYKDQDQINVHSLCVERRYISSLSVNNDKVGQKFYGPDLSGKNENGIPDYSELNPILCTGQSNLTYPAIFHGNSDLLAKRRRNGFIIQFESLQEREKELRPPSGISIEIPINGIFRRNSILAFFDDPQYRRNSSGITKYGTIGVHSILKKEDLIEYRGVKDFKPKYQMQMKVDRFFFIPEEVHILPESSSIMVRNNSIIGVATRLTLSIRSRVGGLVRVEKKKKRIELKIFSGDIHFPGEMDKISRHNGILIPPERVKKNSKKSKKSKNWIYVQWITPTKKKYFVFVRPVIIYELADGINLVKLFPQDLLQERDNLELRVANYILYGNGKPIRGISGTSIQLVRTCLLLNWDRDKKSSSIEDARASFVEVSTNGLVRNFLRIDLGKSDTAYIRKRKDPSGSGLIFNNESDRTNINPFFSIYSKTRVPQSPSQNQGTIRTLLNRNKERQSLIILSASNCLQIDLFNDVKDYNVIKESSKKDPLISIRNSLGPLGAAPQIVNFYSFYYLITHNPISLTKYLQLDNLKQIFQVLKYYLMDENGGILNSDPCINIVFNTFNLNWHFLHDNYHNNYCEETPTRISLGQFFFENVCIAKNRPHLKSGQIIIVQVDSLVIRSAKPYLATSGATVHRHYGEILYEGDTLVTFIYEKSRSGDITQGLPKVEQVLEVRSIDSISMSLEKRIEGWNERITRILGIPWGFLIGAELTIVQSRISLVNKIQKVYRSQGVEIHNRHIEIIVRQITSKVLVSEDGMSNVFSPGELIGLLRAERTGRALEEAICYRAVLLGITKASLNTQSFISEASFQETARVLAKAALRGRIDWLRGLKENVVLGGMIPVGTGFRELAHRSRQHNNIPLETPPKKIFEGEMRDILFHHKELFDFFISTNLHDTSEQEFLGFNDS</sequence>
<keyword id="KW-0150">Chloroplast</keyword>
<keyword id="KW-0240">DNA-directed RNA polymerase</keyword>
<keyword id="KW-0479">Metal-binding</keyword>
<keyword id="KW-0548">Nucleotidyltransferase</keyword>
<keyword id="KW-0934">Plastid</keyword>
<keyword id="KW-0804">Transcription</keyword>
<keyword id="KW-0808">Transferase</keyword>
<keyword id="KW-0862">Zinc</keyword>
<proteinExistence type="inferred from homology"/>
<feature type="chain" id="PRO_0000225331" description="DNA-directed RNA polymerase subunit beta''">
    <location>
        <begin position="1"/>
        <end position="1394"/>
    </location>
</feature>
<feature type="binding site" evidence="1">
    <location>
        <position position="224"/>
    </location>
    <ligand>
        <name>Zn(2+)</name>
        <dbReference type="ChEBI" id="CHEBI:29105"/>
    </ligand>
</feature>
<feature type="binding site" evidence="1">
    <location>
        <position position="295"/>
    </location>
    <ligand>
        <name>Zn(2+)</name>
        <dbReference type="ChEBI" id="CHEBI:29105"/>
    </ligand>
</feature>
<feature type="binding site" evidence="1">
    <location>
        <position position="302"/>
    </location>
    <ligand>
        <name>Zn(2+)</name>
        <dbReference type="ChEBI" id="CHEBI:29105"/>
    </ligand>
</feature>
<feature type="binding site" evidence="1">
    <location>
        <position position="305"/>
    </location>
    <ligand>
        <name>Zn(2+)</name>
        <dbReference type="ChEBI" id="CHEBI:29105"/>
    </ligand>
</feature>
<dbReference type="EC" id="2.7.7.6" evidence="1"/>
<dbReference type="EMBL" id="DQ119058">
    <property type="protein sequence ID" value="AAZ94641.1"/>
    <property type="molecule type" value="Genomic_DNA"/>
</dbReference>
<dbReference type="EMBL" id="AJ970307">
    <property type="protein sequence ID" value="CAJ00748.1"/>
    <property type="molecule type" value="Genomic_DNA"/>
</dbReference>
<dbReference type="EMBL" id="DQ865975">
    <property type="protein sequence ID" value="ABI97407.1"/>
    <property type="molecule type" value="Genomic_DNA"/>
</dbReference>
<dbReference type="EMBL" id="DQ865976">
    <property type="protein sequence ID" value="ABI98735.1"/>
    <property type="molecule type" value="Genomic_DNA"/>
</dbReference>
<dbReference type="RefSeq" id="YP_247589.2">
    <property type="nucleotide sequence ID" value="NC_007144.1"/>
</dbReference>
<dbReference type="SMR" id="Q4VZP3"/>
<dbReference type="GeneID" id="3429304"/>
<dbReference type="KEGG" id="csv:3429304"/>
<dbReference type="eggNOG" id="ENOG502QPYA">
    <property type="taxonomic scope" value="Eukaryota"/>
</dbReference>
<dbReference type="OrthoDB" id="498011at2759"/>
<dbReference type="GO" id="GO:0009507">
    <property type="term" value="C:chloroplast"/>
    <property type="evidence" value="ECO:0007669"/>
    <property type="project" value="UniProtKB-SubCell"/>
</dbReference>
<dbReference type="GO" id="GO:0000428">
    <property type="term" value="C:DNA-directed RNA polymerase complex"/>
    <property type="evidence" value="ECO:0007669"/>
    <property type="project" value="UniProtKB-KW"/>
</dbReference>
<dbReference type="GO" id="GO:0005739">
    <property type="term" value="C:mitochondrion"/>
    <property type="evidence" value="ECO:0007669"/>
    <property type="project" value="GOC"/>
</dbReference>
<dbReference type="GO" id="GO:0003677">
    <property type="term" value="F:DNA binding"/>
    <property type="evidence" value="ECO:0007669"/>
    <property type="project" value="UniProtKB-UniRule"/>
</dbReference>
<dbReference type="GO" id="GO:0003899">
    <property type="term" value="F:DNA-directed RNA polymerase activity"/>
    <property type="evidence" value="ECO:0007669"/>
    <property type="project" value="UniProtKB-UniRule"/>
</dbReference>
<dbReference type="GO" id="GO:0008270">
    <property type="term" value="F:zinc ion binding"/>
    <property type="evidence" value="ECO:0007669"/>
    <property type="project" value="UniProtKB-UniRule"/>
</dbReference>
<dbReference type="GO" id="GO:0006351">
    <property type="term" value="P:DNA-templated transcription"/>
    <property type="evidence" value="ECO:0007669"/>
    <property type="project" value="UniProtKB-UniRule"/>
</dbReference>
<dbReference type="CDD" id="cd02655">
    <property type="entry name" value="RNAP_beta'_C"/>
    <property type="match status" value="1"/>
</dbReference>
<dbReference type="FunFam" id="1.10.132.30:FF:000002">
    <property type="entry name" value="DNA-directed RNA polymerase subunit beta"/>
    <property type="match status" value="1"/>
</dbReference>
<dbReference type="FunFam" id="1.10.1790.20:FF:000002">
    <property type="entry name" value="DNA-directed RNA polymerase subunit beta"/>
    <property type="match status" value="1"/>
</dbReference>
<dbReference type="Gene3D" id="1.10.132.30">
    <property type="match status" value="1"/>
</dbReference>
<dbReference type="Gene3D" id="1.10.150.390">
    <property type="match status" value="1"/>
</dbReference>
<dbReference type="Gene3D" id="1.10.1790.20">
    <property type="match status" value="1"/>
</dbReference>
<dbReference type="Gene3D" id="1.10.274.100">
    <property type="entry name" value="RNA polymerase Rpb1, domain 3"/>
    <property type="match status" value="1"/>
</dbReference>
<dbReference type="HAMAP" id="MF_01324">
    <property type="entry name" value="RNApol_bact_RpoC2"/>
    <property type="match status" value="1"/>
</dbReference>
<dbReference type="InterPro" id="IPR012756">
    <property type="entry name" value="DNA-dir_RpoC2_beta_pp"/>
</dbReference>
<dbReference type="InterPro" id="IPR050254">
    <property type="entry name" value="RNA_pol_beta''_euk"/>
</dbReference>
<dbReference type="InterPro" id="IPR042102">
    <property type="entry name" value="RNA_pol_Rpb1_3_sf"/>
</dbReference>
<dbReference type="InterPro" id="IPR007083">
    <property type="entry name" value="RNA_pol_Rpb1_4"/>
</dbReference>
<dbReference type="InterPro" id="IPR007081">
    <property type="entry name" value="RNA_pol_Rpb1_5"/>
</dbReference>
<dbReference type="InterPro" id="IPR038120">
    <property type="entry name" value="Rpb1_funnel_sf"/>
</dbReference>
<dbReference type="NCBIfam" id="TIGR02388">
    <property type="entry name" value="rpoC2_cyan"/>
    <property type="match status" value="1"/>
</dbReference>
<dbReference type="PANTHER" id="PTHR34995">
    <property type="entry name" value="DNA-DIRECTED RNA POLYMERASE SUBUNIT BETA"/>
    <property type="match status" value="1"/>
</dbReference>
<dbReference type="PANTHER" id="PTHR34995:SF1">
    <property type="entry name" value="DNA-DIRECTED RNA POLYMERASE SUBUNIT BETA"/>
    <property type="match status" value="1"/>
</dbReference>
<dbReference type="Pfam" id="PF05000">
    <property type="entry name" value="RNA_pol_Rpb1_4"/>
    <property type="match status" value="1"/>
</dbReference>
<dbReference type="Pfam" id="PF04998">
    <property type="entry name" value="RNA_pol_Rpb1_5"/>
    <property type="match status" value="2"/>
</dbReference>
<dbReference type="SUPFAM" id="SSF64484">
    <property type="entry name" value="beta and beta-prime subunits of DNA dependent RNA-polymerase"/>
    <property type="match status" value="1"/>
</dbReference>
<evidence type="ECO:0000255" key="1">
    <source>
        <dbReference type="HAMAP-Rule" id="MF_01324"/>
    </source>
</evidence>
<gene>
    <name evidence="1" type="primary">rpoC2</name>
    <name type="ordered locus">CsCp016</name>
</gene>
<organism>
    <name type="scientific">Cucumis sativus</name>
    <name type="common">Cucumber</name>
    <dbReference type="NCBI Taxonomy" id="3659"/>
    <lineage>
        <taxon>Eukaryota</taxon>
        <taxon>Viridiplantae</taxon>
        <taxon>Streptophyta</taxon>
        <taxon>Embryophyta</taxon>
        <taxon>Tracheophyta</taxon>
        <taxon>Spermatophyta</taxon>
        <taxon>Magnoliopsida</taxon>
        <taxon>eudicotyledons</taxon>
        <taxon>Gunneridae</taxon>
        <taxon>Pentapetalae</taxon>
        <taxon>rosids</taxon>
        <taxon>fabids</taxon>
        <taxon>Cucurbitales</taxon>
        <taxon>Cucurbitaceae</taxon>
        <taxon>Benincaseae</taxon>
        <taxon>Cucumis</taxon>
    </lineage>
</organism>
<accession>Q4VZP3</accession>
<accession>A5J1S4</accession>
<geneLocation type="chloroplast"/>